<reference key="1">
    <citation type="journal article" date="2007" name="Nat. Biotechnol.">
        <title>Genome sequence of the lignocellulose-bioconverting and xylose-fermenting yeast Pichia stipitis.</title>
        <authorList>
            <person name="Jeffries T.W."/>
            <person name="Grigoriev I.V."/>
            <person name="Grimwood J."/>
            <person name="Laplaza J.M."/>
            <person name="Aerts A."/>
            <person name="Salamov A."/>
            <person name="Schmutz J."/>
            <person name="Lindquist E."/>
            <person name="Dehal P."/>
            <person name="Shapiro H."/>
            <person name="Jin Y.-S."/>
            <person name="Passoth V."/>
            <person name="Richardson P.M."/>
        </authorList>
    </citation>
    <scope>NUCLEOTIDE SEQUENCE [LARGE SCALE GENOMIC DNA]</scope>
    <source>
        <strain>ATCC 58785 / CBS 6054 / NBRC 10063 / NRRL Y-11545</strain>
    </source>
</reference>
<keyword id="KW-0067">ATP-binding</keyword>
<keyword id="KW-0963">Cytoplasm</keyword>
<keyword id="KW-0256">Endoplasmic reticulum</keyword>
<keyword id="KW-0333">Golgi apparatus</keyword>
<keyword id="KW-0378">Hydrolase</keyword>
<keyword id="KW-0479">Metal-binding</keyword>
<keyword id="KW-0547">Nucleotide-binding</keyword>
<keyword id="KW-1185">Reference proteome</keyword>
<keyword id="KW-0813">Transport</keyword>
<keyword id="KW-0862">Zinc</keyword>
<name>GET3_PICST</name>
<gene>
    <name evidence="1" type="primary">GET3</name>
    <name type="ORF">PICST_48071</name>
</gene>
<sequence length="347" mass="39294">MDFELEPTLESIVQQDTLKWIFVGGKGGVGKTTTSSSIAVQLALNHPNDQFLLISTDPAHNLSDAFCQKFGKDARKVDGLSNLSCMEIDPEAAMSDLQQQAQQYNNDPNDPLKSMMNDMTGSIPGIDEALSFMEVLKHIKSQKVDENDDKDKISYRTIIFDTAPTGHTLRFLQLPSTLQKLLSKFQALSGKFGPMMSMLGGGNQQEMFDKLNEVQKNVTEVNEQFTNPDLTTFVCVCISEFLSLYETERMIQELMSYNMDVNSIVVNQLLFADDDEKPCKRCVSRWKMQKKYLDQMAELYEDYHLVKMPLLGTEIRGVENLKKFSKFLLTPYDPKVNGDLVTSLEEK</sequence>
<evidence type="ECO:0000255" key="1">
    <source>
        <dbReference type="HAMAP-Rule" id="MF_03112"/>
    </source>
</evidence>
<feature type="chain" id="PRO_0000388225" description="ATPase GET3">
    <location>
        <begin position="1"/>
        <end position="347"/>
    </location>
</feature>
<feature type="active site" evidence="1">
    <location>
        <position position="57"/>
    </location>
</feature>
<feature type="binding site" evidence="1">
    <location>
        <begin position="26"/>
        <end position="33"/>
    </location>
    <ligand>
        <name>ATP</name>
        <dbReference type="ChEBI" id="CHEBI:30616"/>
    </ligand>
</feature>
<feature type="binding site" evidence="1">
    <location>
        <position position="240"/>
    </location>
    <ligand>
        <name>ATP</name>
        <dbReference type="ChEBI" id="CHEBI:30616"/>
    </ligand>
</feature>
<feature type="binding site" evidence="1">
    <location>
        <position position="267"/>
    </location>
    <ligand>
        <name>ATP</name>
        <dbReference type="ChEBI" id="CHEBI:30616"/>
    </ligand>
</feature>
<feature type="binding site" evidence="1">
    <location>
        <position position="279"/>
    </location>
    <ligand>
        <name>Zn(2+)</name>
        <dbReference type="ChEBI" id="CHEBI:29105"/>
        <note>ligand shared between dimeric partners</note>
    </ligand>
</feature>
<feature type="binding site" evidence="1">
    <location>
        <position position="282"/>
    </location>
    <ligand>
        <name>Zn(2+)</name>
        <dbReference type="ChEBI" id="CHEBI:29105"/>
        <note>ligand shared between dimeric partners</note>
    </ligand>
</feature>
<proteinExistence type="inferred from homology"/>
<organism>
    <name type="scientific">Scheffersomyces stipitis (strain ATCC 58785 / CBS 6054 / NBRC 10063 / NRRL Y-11545)</name>
    <name type="common">Yeast</name>
    <name type="synonym">Pichia stipitis</name>
    <dbReference type="NCBI Taxonomy" id="322104"/>
    <lineage>
        <taxon>Eukaryota</taxon>
        <taxon>Fungi</taxon>
        <taxon>Dikarya</taxon>
        <taxon>Ascomycota</taxon>
        <taxon>Saccharomycotina</taxon>
        <taxon>Pichiomycetes</taxon>
        <taxon>Debaryomycetaceae</taxon>
        <taxon>Scheffersomyces</taxon>
    </lineage>
</organism>
<dbReference type="EC" id="3.6.-.-" evidence="1"/>
<dbReference type="EMBL" id="CP000500">
    <property type="protein sequence ID" value="ABN67382.1"/>
    <property type="molecule type" value="Genomic_DNA"/>
</dbReference>
<dbReference type="SMR" id="A3LX15"/>
<dbReference type="FunCoup" id="A3LX15">
    <property type="interactions" value="1019"/>
</dbReference>
<dbReference type="STRING" id="322104.A3LX15"/>
<dbReference type="KEGG" id="pic:PICST_48071"/>
<dbReference type="eggNOG" id="KOG2825">
    <property type="taxonomic scope" value="Eukaryota"/>
</dbReference>
<dbReference type="HOGENOM" id="CLU_040761_0_0_1"/>
<dbReference type="InParanoid" id="A3LX15"/>
<dbReference type="OMA" id="MDAPYEF"/>
<dbReference type="OrthoDB" id="1770at2759"/>
<dbReference type="Proteomes" id="UP000002258">
    <property type="component" value="Chromosome 6"/>
</dbReference>
<dbReference type="GO" id="GO:0043529">
    <property type="term" value="C:GET complex"/>
    <property type="evidence" value="ECO:0007669"/>
    <property type="project" value="TreeGrafter"/>
</dbReference>
<dbReference type="GO" id="GO:0005794">
    <property type="term" value="C:Golgi apparatus"/>
    <property type="evidence" value="ECO:0007669"/>
    <property type="project" value="UniProtKB-SubCell"/>
</dbReference>
<dbReference type="GO" id="GO:0005524">
    <property type="term" value="F:ATP binding"/>
    <property type="evidence" value="ECO:0007669"/>
    <property type="project" value="UniProtKB-UniRule"/>
</dbReference>
<dbReference type="GO" id="GO:0016887">
    <property type="term" value="F:ATP hydrolysis activity"/>
    <property type="evidence" value="ECO:0007669"/>
    <property type="project" value="InterPro"/>
</dbReference>
<dbReference type="GO" id="GO:0046872">
    <property type="term" value="F:metal ion binding"/>
    <property type="evidence" value="ECO:0007669"/>
    <property type="project" value="UniProtKB-KW"/>
</dbReference>
<dbReference type="GO" id="GO:0071816">
    <property type="term" value="P:tail-anchored membrane protein insertion into ER membrane"/>
    <property type="evidence" value="ECO:0007669"/>
    <property type="project" value="TreeGrafter"/>
</dbReference>
<dbReference type="CDD" id="cd02035">
    <property type="entry name" value="ArsA"/>
    <property type="match status" value="1"/>
</dbReference>
<dbReference type="FunFam" id="3.40.50.300:FF:001359">
    <property type="entry name" value="ATPase GET3"/>
    <property type="match status" value="1"/>
</dbReference>
<dbReference type="Gene3D" id="3.40.50.300">
    <property type="entry name" value="P-loop containing nucleotide triphosphate hydrolases"/>
    <property type="match status" value="1"/>
</dbReference>
<dbReference type="HAMAP" id="MF_03112">
    <property type="entry name" value="Asna1_Get3"/>
    <property type="match status" value="1"/>
</dbReference>
<dbReference type="InterPro" id="IPR025723">
    <property type="entry name" value="Anion-transp_ATPase-like_dom"/>
</dbReference>
<dbReference type="InterPro" id="IPR016300">
    <property type="entry name" value="ATPase_ArsA/GET3"/>
</dbReference>
<dbReference type="InterPro" id="IPR027542">
    <property type="entry name" value="ATPase_ArsA/GET3_euk"/>
</dbReference>
<dbReference type="InterPro" id="IPR027417">
    <property type="entry name" value="P-loop_NTPase"/>
</dbReference>
<dbReference type="NCBIfam" id="TIGR00345">
    <property type="entry name" value="GET3_arsA_TRC40"/>
    <property type="match status" value="1"/>
</dbReference>
<dbReference type="PANTHER" id="PTHR10803">
    <property type="entry name" value="ARSENICAL PUMP-DRIVING ATPASE ARSENITE-TRANSLOCATING ATPASE"/>
    <property type="match status" value="1"/>
</dbReference>
<dbReference type="PANTHER" id="PTHR10803:SF3">
    <property type="entry name" value="ATPASE GET3"/>
    <property type="match status" value="1"/>
</dbReference>
<dbReference type="Pfam" id="PF02374">
    <property type="entry name" value="ArsA_ATPase"/>
    <property type="match status" value="1"/>
</dbReference>
<dbReference type="SUPFAM" id="SSF52540">
    <property type="entry name" value="P-loop containing nucleoside triphosphate hydrolases"/>
    <property type="match status" value="1"/>
</dbReference>
<protein>
    <recommendedName>
        <fullName evidence="1">ATPase GET3</fullName>
        <ecNumber evidence="1">3.6.-.-</ecNumber>
    </recommendedName>
    <alternativeName>
        <fullName evidence="1">Arsenical pump-driving ATPase</fullName>
    </alternativeName>
    <alternativeName>
        <fullName evidence="1">Arsenite-stimulated ATPase</fullName>
    </alternativeName>
    <alternativeName>
        <fullName evidence="1">Golgi to ER traffic protein 3</fullName>
    </alternativeName>
    <alternativeName>
        <fullName evidence="1">Guided entry of tail-anchored proteins 3</fullName>
    </alternativeName>
</protein>
<comment type="function">
    <text evidence="1">ATPase required for the post-translational delivery of tail-anchored (TA) proteins to the endoplasmic reticulum. Recognizes and selectively binds the transmembrane domain of TA proteins in the cytosol. This complex then targets to the endoplasmic reticulum by membrane-bound receptors GET1 and GET2, where the tail-anchored protein is released for insertion. This process is regulated by ATP binding and hydrolysis. ATP binding drives the homodimer towards the closed dimer state, facilitating recognition of newly synthesized TA membrane proteins. ATP hydrolysis is required for insertion. Subsequently, the homodimer reverts towards the open dimer state, lowering its affinity for the GET1-GET2 receptor, and returning it to the cytosol to initiate a new round of targeting. Cooperates with the HDEL receptor ERD2 to mediate the ATP-dependent retrieval of resident ER proteins that contain a C-terminal H-D-E-L retention signal from the Golgi to the ER. Involved in low-level resistance to the oxyanions arsenite and arsenate, and in heat tolerance.</text>
</comment>
<comment type="subunit">
    <text evidence="1">Homodimer. Component of the Golgi to ER traffic (GET) complex, which is composed of GET1, GET2 and GET3. Within the complex, GET1 and GET2 form a heterotetramer which is stabilized by phosphatidylinositol binding and which binds to the GET3 homodimer. Interacts with the chloride channel protein GEF1.</text>
</comment>
<comment type="subcellular location">
    <subcellularLocation>
        <location evidence="1">Cytoplasm</location>
    </subcellularLocation>
    <subcellularLocation>
        <location evidence="1">Endoplasmic reticulum</location>
    </subcellularLocation>
    <subcellularLocation>
        <location evidence="1">Golgi apparatus</location>
    </subcellularLocation>
    <text evidence="1">GET1 and GET2 are required for targeting GET3 to the endoplasmic reticulum.</text>
</comment>
<comment type="similarity">
    <text evidence="1">Belongs to the arsA ATPase family.</text>
</comment>
<accession>A3LX15</accession>